<comment type="function">
    <text evidence="1">Binds 23S rRNA and is also seen to make contacts with the A and possibly P site tRNAs.</text>
</comment>
<comment type="subunit">
    <text evidence="1">Part of the 50S ribosomal subunit.</text>
</comment>
<comment type="similarity">
    <text evidence="1">Belongs to the universal ribosomal protein uL16 family.</text>
</comment>
<accession>B1AIM7</accession>
<dbReference type="EMBL" id="CP000942">
    <property type="protein sequence ID" value="ACA33001.1"/>
    <property type="molecule type" value="Genomic_DNA"/>
</dbReference>
<dbReference type="RefSeq" id="WP_006688879.1">
    <property type="nucleotide sequence ID" value="NC_010503.1"/>
</dbReference>
<dbReference type="SMR" id="B1AIM7"/>
<dbReference type="GeneID" id="29672668"/>
<dbReference type="KEGG" id="upa:UPA3_0246"/>
<dbReference type="HOGENOM" id="CLU_078858_2_1_14"/>
<dbReference type="Proteomes" id="UP000002162">
    <property type="component" value="Chromosome"/>
</dbReference>
<dbReference type="GO" id="GO:0022625">
    <property type="term" value="C:cytosolic large ribosomal subunit"/>
    <property type="evidence" value="ECO:0007669"/>
    <property type="project" value="TreeGrafter"/>
</dbReference>
<dbReference type="GO" id="GO:0019843">
    <property type="term" value="F:rRNA binding"/>
    <property type="evidence" value="ECO:0007669"/>
    <property type="project" value="UniProtKB-UniRule"/>
</dbReference>
<dbReference type="GO" id="GO:0003735">
    <property type="term" value="F:structural constituent of ribosome"/>
    <property type="evidence" value="ECO:0007669"/>
    <property type="project" value="InterPro"/>
</dbReference>
<dbReference type="GO" id="GO:0000049">
    <property type="term" value="F:tRNA binding"/>
    <property type="evidence" value="ECO:0007669"/>
    <property type="project" value="UniProtKB-KW"/>
</dbReference>
<dbReference type="GO" id="GO:0006412">
    <property type="term" value="P:translation"/>
    <property type="evidence" value="ECO:0007669"/>
    <property type="project" value="UniProtKB-UniRule"/>
</dbReference>
<dbReference type="CDD" id="cd01433">
    <property type="entry name" value="Ribosomal_L16_L10e"/>
    <property type="match status" value="1"/>
</dbReference>
<dbReference type="FunFam" id="3.90.1170.10:FF:000001">
    <property type="entry name" value="50S ribosomal protein L16"/>
    <property type="match status" value="1"/>
</dbReference>
<dbReference type="Gene3D" id="3.90.1170.10">
    <property type="entry name" value="Ribosomal protein L10e/L16"/>
    <property type="match status" value="1"/>
</dbReference>
<dbReference type="HAMAP" id="MF_01342">
    <property type="entry name" value="Ribosomal_uL16"/>
    <property type="match status" value="1"/>
</dbReference>
<dbReference type="InterPro" id="IPR047873">
    <property type="entry name" value="Ribosomal_uL16"/>
</dbReference>
<dbReference type="InterPro" id="IPR000114">
    <property type="entry name" value="Ribosomal_uL16_bact-type"/>
</dbReference>
<dbReference type="InterPro" id="IPR020798">
    <property type="entry name" value="Ribosomal_uL16_CS"/>
</dbReference>
<dbReference type="InterPro" id="IPR016180">
    <property type="entry name" value="Ribosomal_uL16_dom"/>
</dbReference>
<dbReference type="InterPro" id="IPR036920">
    <property type="entry name" value="Ribosomal_uL16_sf"/>
</dbReference>
<dbReference type="NCBIfam" id="TIGR01164">
    <property type="entry name" value="rplP_bact"/>
    <property type="match status" value="1"/>
</dbReference>
<dbReference type="PANTHER" id="PTHR12220">
    <property type="entry name" value="50S/60S RIBOSOMAL PROTEIN L16"/>
    <property type="match status" value="1"/>
</dbReference>
<dbReference type="PANTHER" id="PTHR12220:SF13">
    <property type="entry name" value="LARGE RIBOSOMAL SUBUNIT PROTEIN UL16M"/>
    <property type="match status" value="1"/>
</dbReference>
<dbReference type="Pfam" id="PF00252">
    <property type="entry name" value="Ribosomal_L16"/>
    <property type="match status" value="1"/>
</dbReference>
<dbReference type="PRINTS" id="PR00060">
    <property type="entry name" value="RIBOSOMALL16"/>
</dbReference>
<dbReference type="SUPFAM" id="SSF54686">
    <property type="entry name" value="Ribosomal protein L16p/L10e"/>
    <property type="match status" value="1"/>
</dbReference>
<dbReference type="PROSITE" id="PS00701">
    <property type="entry name" value="RIBOSOMAL_L16_2"/>
    <property type="match status" value="1"/>
</dbReference>
<organism>
    <name type="scientific">Ureaplasma parvum serovar 3 (strain ATCC 27815 / 27 / NCTC 11736)</name>
    <dbReference type="NCBI Taxonomy" id="505682"/>
    <lineage>
        <taxon>Bacteria</taxon>
        <taxon>Bacillati</taxon>
        <taxon>Mycoplasmatota</taxon>
        <taxon>Mycoplasmoidales</taxon>
        <taxon>Mycoplasmoidaceae</taxon>
        <taxon>Ureaplasma</taxon>
    </lineage>
</organism>
<name>RL16_UREP2</name>
<reference key="1">
    <citation type="submission" date="2008-02" db="EMBL/GenBank/DDBJ databases">
        <title>Genome sequence of Ureaplasma parvum serovar 3.</title>
        <authorList>
            <person name="Methe B.A."/>
            <person name="Glass J."/>
            <person name="Waites K."/>
            <person name="Shrivastava S."/>
        </authorList>
    </citation>
    <scope>NUCLEOTIDE SEQUENCE [LARGE SCALE GENOMIC DNA]</scope>
    <source>
        <strain>ATCC 27815 / 27 / NCTC 11736</strain>
    </source>
</reference>
<gene>
    <name evidence="1" type="primary">rplP</name>
    <name type="ordered locus">UPA3_0246</name>
</gene>
<feature type="chain" id="PRO_1000086785" description="Large ribosomal subunit protein uL16">
    <location>
        <begin position="1"/>
        <end position="138"/>
    </location>
</feature>
<proteinExistence type="inferred from homology"/>
<sequence length="138" mass="15422">MLQPKRTKFRKPHKVSYEGKAKGNKQVDFGEFGLMALEGAWIDARQIESARIAISKRLLKTGKMWIRIFPHMSLTKKPLEVRMGSGKGSPEKWVAVVKAGTVMFEIANVSEELMCEALRAAGNKLPIKVKIVKKGEAN</sequence>
<keyword id="KW-0687">Ribonucleoprotein</keyword>
<keyword id="KW-0689">Ribosomal protein</keyword>
<keyword id="KW-0694">RNA-binding</keyword>
<keyword id="KW-0699">rRNA-binding</keyword>
<keyword id="KW-0820">tRNA-binding</keyword>
<evidence type="ECO:0000255" key="1">
    <source>
        <dbReference type="HAMAP-Rule" id="MF_01342"/>
    </source>
</evidence>
<evidence type="ECO:0000305" key="2"/>
<protein>
    <recommendedName>
        <fullName evidence="1">Large ribosomal subunit protein uL16</fullName>
    </recommendedName>
    <alternativeName>
        <fullName evidence="2">50S ribosomal protein L16</fullName>
    </alternativeName>
</protein>